<feature type="chain" id="PRO_1000054868" description="Small ribosomal subunit protein uS15">
    <location>
        <begin position="1"/>
        <end position="89"/>
    </location>
</feature>
<comment type="function">
    <text evidence="1">One of the primary rRNA binding proteins, it binds directly to 16S rRNA where it helps nucleate assembly of the platform of the 30S subunit by binding and bridging several RNA helices of the 16S rRNA.</text>
</comment>
<comment type="function">
    <text evidence="1">Forms an intersubunit bridge (bridge B4) with the 23S rRNA of the 50S subunit in the ribosome.</text>
</comment>
<comment type="subunit">
    <text evidence="1">Part of the 30S ribosomal subunit. Forms a bridge to the 50S subunit in the 70S ribosome, contacting the 23S rRNA.</text>
</comment>
<comment type="similarity">
    <text evidence="1">Belongs to the universal ribosomal protein uS15 family.</text>
</comment>
<organism>
    <name type="scientific">Shewanella frigidimarina (strain NCIMB 400)</name>
    <dbReference type="NCBI Taxonomy" id="318167"/>
    <lineage>
        <taxon>Bacteria</taxon>
        <taxon>Pseudomonadati</taxon>
        <taxon>Pseudomonadota</taxon>
        <taxon>Gammaproteobacteria</taxon>
        <taxon>Alteromonadales</taxon>
        <taxon>Shewanellaceae</taxon>
        <taxon>Shewanella</taxon>
    </lineage>
</organism>
<reference key="1">
    <citation type="submission" date="2006-08" db="EMBL/GenBank/DDBJ databases">
        <title>Complete sequence of Shewanella frigidimarina NCIMB 400.</title>
        <authorList>
            <consortium name="US DOE Joint Genome Institute"/>
            <person name="Copeland A."/>
            <person name="Lucas S."/>
            <person name="Lapidus A."/>
            <person name="Barry K."/>
            <person name="Detter J.C."/>
            <person name="Glavina del Rio T."/>
            <person name="Hammon N."/>
            <person name="Israni S."/>
            <person name="Dalin E."/>
            <person name="Tice H."/>
            <person name="Pitluck S."/>
            <person name="Fredrickson J.K."/>
            <person name="Kolker E."/>
            <person name="McCuel L.A."/>
            <person name="DiChristina T."/>
            <person name="Nealson K.H."/>
            <person name="Newman D."/>
            <person name="Tiedje J.M."/>
            <person name="Zhou J."/>
            <person name="Romine M.F."/>
            <person name="Culley D.E."/>
            <person name="Serres M."/>
            <person name="Chertkov O."/>
            <person name="Brettin T."/>
            <person name="Bruce D."/>
            <person name="Han C."/>
            <person name="Tapia R."/>
            <person name="Gilna P."/>
            <person name="Schmutz J."/>
            <person name="Larimer F."/>
            <person name="Land M."/>
            <person name="Hauser L."/>
            <person name="Kyrpides N."/>
            <person name="Mikhailova N."/>
            <person name="Richardson P."/>
        </authorList>
    </citation>
    <scope>NUCLEOTIDE SEQUENCE [LARGE SCALE GENOMIC DNA]</scope>
    <source>
        <strain>NCIMB 400</strain>
    </source>
</reference>
<gene>
    <name evidence="1" type="primary">rpsO</name>
    <name type="ordered locus">Sfri_0993</name>
</gene>
<accession>Q086G9</accession>
<keyword id="KW-1185">Reference proteome</keyword>
<keyword id="KW-0687">Ribonucleoprotein</keyword>
<keyword id="KW-0689">Ribosomal protein</keyword>
<keyword id="KW-0694">RNA-binding</keyword>
<keyword id="KW-0699">rRNA-binding</keyword>
<proteinExistence type="inferred from homology"/>
<name>RS15_SHEFN</name>
<sequence length="89" mass="10155">MSLSAETKAKILADFGRCENDTGSTEVQVALLTAQINHLQGHFKEHIHDHHSRRGLLRMVSARRKLSAYLKRTDVARYTAMIQKLGLRR</sequence>
<protein>
    <recommendedName>
        <fullName evidence="1">Small ribosomal subunit protein uS15</fullName>
    </recommendedName>
    <alternativeName>
        <fullName evidence="2">30S ribosomal protein S15</fullName>
    </alternativeName>
</protein>
<dbReference type="EMBL" id="CP000447">
    <property type="protein sequence ID" value="ABI70846.1"/>
    <property type="molecule type" value="Genomic_DNA"/>
</dbReference>
<dbReference type="RefSeq" id="WP_011636467.1">
    <property type="nucleotide sequence ID" value="NC_008345.1"/>
</dbReference>
<dbReference type="SMR" id="Q086G9"/>
<dbReference type="STRING" id="318167.Sfri_0993"/>
<dbReference type="KEGG" id="sfr:Sfri_0993"/>
<dbReference type="eggNOG" id="COG0184">
    <property type="taxonomic scope" value="Bacteria"/>
</dbReference>
<dbReference type="HOGENOM" id="CLU_148518_0_0_6"/>
<dbReference type="OrthoDB" id="9799262at2"/>
<dbReference type="Proteomes" id="UP000000684">
    <property type="component" value="Chromosome"/>
</dbReference>
<dbReference type="GO" id="GO:0022627">
    <property type="term" value="C:cytosolic small ribosomal subunit"/>
    <property type="evidence" value="ECO:0007669"/>
    <property type="project" value="TreeGrafter"/>
</dbReference>
<dbReference type="GO" id="GO:0019843">
    <property type="term" value="F:rRNA binding"/>
    <property type="evidence" value="ECO:0007669"/>
    <property type="project" value="UniProtKB-UniRule"/>
</dbReference>
<dbReference type="GO" id="GO:0003735">
    <property type="term" value="F:structural constituent of ribosome"/>
    <property type="evidence" value="ECO:0007669"/>
    <property type="project" value="InterPro"/>
</dbReference>
<dbReference type="GO" id="GO:0006412">
    <property type="term" value="P:translation"/>
    <property type="evidence" value="ECO:0007669"/>
    <property type="project" value="UniProtKB-UniRule"/>
</dbReference>
<dbReference type="CDD" id="cd00353">
    <property type="entry name" value="Ribosomal_S15p_S13e"/>
    <property type="match status" value="1"/>
</dbReference>
<dbReference type="FunFam" id="1.10.287.10:FF:000002">
    <property type="entry name" value="30S ribosomal protein S15"/>
    <property type="match status" value="1"/>
</dbReference>
<dbReference type="Gene3D" id="6.10.250.3130">
    <property type="match status" value="1"/>
</dbReference>
<dbReference type="Gene3D" id="1.10.287.10">
    <property type="entry name" value="S15/NS1, RNA-binding"/>
    <property type="match status" value="1"/>
</dbReference>
<dbReference type="HAMAP" id="MF_01343_B">
    <property type="entry name" value="Ribosomal_uS15_B"/>
    <property type="match status" value="1"/>
</dbReference>
<dbReference type="InterPro" id="IPR000589">
    <property type="entry name" value="Ribosomal_uS15"/>
</dbReference>
<dbReference type="InterPro" id="IPR005290">
    <property type="entry name" value="Ribosomal_uS15_bac-type"/>
</dbReference>
<dbReference type="InterPro" id="IPR009068">
    <property type="entry name" value="uS15_NS1_RNA-bd_sf"/>
</dbReference>
<dbReference type="NCBIfam" id="TIGR00952">
    <property type="entry name" value="S15_bact"/>
    <property type="match status" value="1"/>
</dbReference>
<dbReference type="PANTHER" id="PTHR23321">
    <property type="entry name" value="RIBOSOMAL PROTEIN S15, BACTERIAL AND ORGANELLAR"/>
    <property type="match status" value="1"/>
</dbReference>
<dbReference type="PANTHER" id="PTHR23321:SF26">
    <property type="entry name" value="SMALL RIBOSOMAL SUBUNIT PROTEIN US15M"/>
    <property type="match status" value="1"/>
</dbReference>
<dbReference type="Pfam" id="PF00312">
    <property type="entry name" value="Ribosomal_S15"/>
    <property type="match status" value="1"/>
</dbReference>
<dbReference type="SMART" id="SM01387">
    <property type="entry name" value="Ribosomal_S15"/>
    <property type="match status" value="1"/>
</dbReference>
<dbReference type="SUPFAM" id="SSF47060">
    <property type="entry name" value="S15/NS1 RNA-binding domain"/>
    <property type="match status" value="1"/>
</dbReference>
<dbReference type="PROSITE" id="PS00362">
    <property type="entry name" value="RIBOSOMAL_S15"/>
    <property type="match status" value="1"/>
</dbReference>
<evidence type="ECO:0000255" key="1">
    <source>
        <dbReference type="HAMAP-Rule" id="MF_01343"/>
    </source>
</evidence>
<evidence type="ECO:0000305" key="2"/>